<reference key="1">
    <citation type="submission" date="2006-06" db="EMBL/GenBank/DDBJ databases">
        <title>Complete sequence of chromosome of Mesorhizobium sp. BNC1.</title>
        <authorList>
            <consortium name="US DOE Joint Genome Institute"/>
            <person name="Copeland A."/>
            <person name="Lucas S."/>
            <person name="Lapidus A."/>
            <person name="Barry K."/>
            <person name="Detter J.C."/>
            <person name="Glavina del Rio T."/>
            <person name="Hammon N."/>
            <person name="Israni S."/>
            <person name="Dalin E."/>
            <person name="Tice H."/>
            <person name="Pitluck S."/>
            <person name="Chertkov O."/>
            <person name="Brettin T."/>
            <person name="Bruce D."/>
            <person name="Han C."/>
            <person name="Tapia R."/>
            <person name="Gilna P."/>
            <person name="Schmutz J."/>
            <person name="Larimer F."/>
            <person name="Land M."/>
            <person name="Hauser L."/>
            <person name="Kyrpides N."/>
            <person name="Mikhailova N."/>
            <person name="Richardson P."/>
        </authorList>
    </citation>
    <scope>NUCLEOTIDE SEQUENCE [LARGE SCALE GENOMIC DNA]</scope>
    <source>
        <strain>BNC1</strain>
    </source>
</reference>
<proteinExistence type="inferred from homology"/>
<evidence type="ECO:0000255" key="1">
    <source>
        <dbReference type="HAMAP-Rule" id="MF_00558"/>
    </source>
</evidence>
<comment type="function">
    <text evidence="1">Succinyl-CoA synthetase functions in the citric acid cycle (TCA), coupling the hydrolysis of succinyl-CoA to the synthesis of either ATP or GTP and thus represents the only step of substrate-level phosphorylation in the TCA. The beta subunit provides nucleotide specificity of the enzyme and binds the substrate succinate, while the binding sites for coenzyme A and phosphate are found in the alpha subunit.</text>
</comment>
<comment type="catalytic activity">
    <reaction evidence="1">
        <text>succinate + ATP + CoA = succinyl-CoA + ADP + phosphate</text>
        <dbReference type="Rhea" id="RHEA:17661"/>
        <dbReference type="ChEBI" id="CHEBI:30031"/>
        <dbReference type="ChEBI" id="CHEBI:30616"/>
        <dbReference type="ChEBI" id="CHEBI:43474"/>
        <dbReference type="ChEBI" id="CHEBI:57287"/>
        <dbReference type="ChEBI" id="CHEBI:57292"/>
        <dbReference type="ChEBI" id="CHEBI:456216"/>
        <dbReference type="EC" id="6.2.1.5"/>
    </reaction>
    <physiologicalReaction direction="right-to-left" evidence="1">
        <dbReference type="Rhea" id="RHEA:17663"/>
    </physiologicalReaction>
</comment>
<comment type="catalytic activity">
    <reaction evidence="1">
        <text>GTP + succinate + CoA = succinyl-CoA + GDP + phosphate</text>
        <dbReference type="Rhea" id="RHEA:22120"/>
        <dbReference type="ChEBI" id="CHEBI:30031"/>
        <dbReference type="ChEBI" id="CHEBI:37565"/>
        <dbReference type="ChEBI" id="CHEBI:43474"/>
        <dbReference type="ChEBI" id="CHEBI:57287"/>
        <dbReference type="ChEBI" id="CHEBI:57292"/>
        <dbReference type="ChEBI" id="CHEBI:58189"/>
    </reaction>
    <physiologicalReaction direction="right-to-left" evidence="1">
        <dbReference type="Rhea" id="RHEA:22122"/>
    </physiologicalReaction>
</comment>
<comment type="cofactor">
    <cofactor evidence="1">
        <name>Mg(2+)</name>
        <dbReference type="ChEBI" id="CHEBI:18420"/>
    </cofactor>
    <text evidence="1">Binds 1 Mg(2+) ion per subunit.</text>
</comment>
<comment type="pathway">
    <text evidence="1">Carbohydrate metabolism; tricarboxylic acid cycle; succinate from succinyl-CoA (ligase route): step 1/1.</text>
</comment>
<comment type="subunit">
    <text evidence="1">Heterotetramer of two alpha and two beta subunits.</text>
</comment>
<comment type="similarity">
    <text evidence="1">Belongs to the succinate/malate CoA ligase beta subunit family.</text>
</comment>
<protein>
    <recommendedName>
        <fullName evidence="1">Succinate--CoA ligase [ADP-forming] subunit beta</fullName>
        <ecNumber evidence="1">6.2.1.5</ecNumber>
    </recommendedName>
    <alternativeName>
        <fullName evidence="1">Succinyl-CoA synthetase subunit beta</fullName>
        <shortName evidence="1">SCS-beta</shortName>
    </alternativeName>
</protein>
<accession>Q11CV8</accession>
<organism>
    <name type="scientific">Chelativorans sp. (strain BNC1)</name>
    <dbReference type="NCBI Taxonomy" id="266779"/>
    <lineage>
        <taxon>Bacteria</taxon>
        <taxon>Pseudomonadati</taxon>
        <taxon>Pseudomonadota</taxon>
        <taxon>Alphaproteobacteria</taxon>
        <taxon>Hyphomicrobiales</taxon>
        <taxon>Phyllobacteriaceae</taxon>
        <taxon>Chelativorans</taxon>
    </lineage>
</organism>
<sequence>MNIHEYQAKELLRGYGAPVAQGVAIFTSGEAEAAAKKLPGPLYVVKSQIHAGGRGKGKFKELSPDAKGGVRLAKSIEEVVANAKEMLGNTLVTKQTGPEGKQVNRLYIEDGADIARELYLSILIDRTVGRPAFVVSTEGGMDIEAVAEETPEKILTLAIAPERGVTNDDVTKLNAALKLDGAAAKDGETLFPILYKAFTEKDMSLLEVNPLIVMQNGRLRVLDAKVSFDNNALFRHEDVVELRDTSEEDEKEIEASKYDLAYVALDGDIGCMVNGAGLAMATMDIIKLYGAEPANFLDVGGGASKEKVTAAFKIITADPNVKGILVNIFGGIMRCDVIAEGVIAAVKEVGLKVPLVVRLEGTNVDLGKKIISQSGLNVIPADDLDDAAKKIVAAVKS</sequence>
<gene>
    <name evidence="1" type="primary">sucC</name>
    <name type="ordered locus">Meso_3396</name>
</gene>
<dbReference type="EC" id="6.2.1.5" evidence="1"/>
<dbReference type="EMBL" id="CP000390">
    <property type="protein sequence ID" value="ABG64767.1"/>
    <property type="molecule type" value="Genomic_DNA"/>
</dbReference>
<dbReference type="SMR" id="Q11CV8"/>
<dbReference type="STRING" id="266779.Meso_3396"/>
<dbReference type="KEGG" id="mes:Meso_3396"/>
<dbReference type="eggNOG" id="COG0045">
    <property type="taxonomic scope" value="Bacteria"/>
</dbReference>
<dbReference type="HOGENOM" id="CLU_037430_0_2_5"/>
<dbReference type="OrthoDB" id="9802602at2"/>
<dbReference type="UniPathway" id="UPA00223">
    <property type="reaction ID" value="UER00999"/>
</dbReference>
<dbReference type="GO" id="GO:0005829">
    <property type="term" value="C:cytosol"/>
    <property type="evidence" value="ECO:0007669"/>
    <property type="project" value="TreeGrafter"/>
</dbReference>
<dbReference type="GO" id="GO:0042709">
    <property type="term" value="C:succinate-CoA ligase complex"/>
    <property type="evidence" value="ECO:0007669"/>
    <property type="project" value="TreeGrafter"/>
</dbReference>
<dbReference type="GO" id="GO:0005524">
    <property type="term" value="F:ATP binding"/>
    <property type="evidence" value="ECO:0007669"/>
    <property type="project" value="UniProtKB-UniRule"/>
</dbReference>
<dbReference type="GO" id="GO:0000287">
    <property type="term" value="F:magnesium ion binding"/>
    <property type="evidence" value="ECO:0007669"/>
    <property type="project" value="UniProtKB-UniRule"/>
</dbReference>
<dbReference type="GO" id="GO:0004775">
    <property type="term" value="F:succinate-CoA ligase (ADP-forming) activity"/>
    <property type="evidence" value="ECO:0007669"/>
    <property type="project" value="UniProtKB-UniRule"/>
</dbReference>
<dbReference type="GO" id="GO:0004776">
    <property type="term" value="F:succinate-CoA ligase (GDP-forming) activity"/>
    <property type="evidence" value="ECO:0007669"/>
    <property type="project" value="RHEA"/>
</dbReference>
<dbReference type="GO" id="GO:0006104">
    <property type="term" value="P:succinyl-CoA metabolic process"/>
    <property type="evidence" value="ECO:0007669"/>
    <property type="project" value="TreeGrafter"/>
</dbReference>
<dbReference type="GO" id="GO:0006099">
    <property type="term" value="P:tricarboxylic acid cycle"/>
    <property type="evidence" value="ECO:0007669"/>
    <property type="project" value="UniProtKB-UniRule"/>
</dbReference>
<dbReference type="FunFam" id="3.30.1490.20:FF:000002">
    <property type="entry name" value="Succinate--CoA ligase [ADP-forming] subunit beta"/>
    <property type="match status" value="1"/>
</dbReference>
<dbReference type="FunFam" id="3.30.470.20:FF:000002">
    <property type="entry name" value="Succinate--CoA ligase [ADP-forming] subunit beta"/>
    <property type="match status" value="1"/>
</dbReference>
<dbReference type="FunFam" id="3.40.50.261:FF:000001">
    <property type="entry name" value="Succinate--CoA ligase [ADP-forming] subunit beta"/>
    <property type="match status" value="1"/>
</dbReference>
<dbReference type="Gene3D" id="3.30.1490.20">
    <property type="entry name" value="ATP-grasp fold, A domain"/>
    <property type="match status" value="1"/>
</dbReference>
<dbReference type="Gene3D" id="3.30.470.20">
    <property type="entry name" value="ATP-grasp fold, B domain"/>
    <property type="match status" value="1"/>
</dbReference>
<dbReference type="Gene3D" id="3.40.50.261">
    <property type="entry name" value="Succinyl-CoA synthetase domains"/>
    <property type="match status" value="1"/>
</dbReference>
<dbReference type="HAMAP" id="MF_00558">
    <property type="entry name" value="Succ_CoA_beta"/>
    <property type="match status" value="1"/>
</dbReference>
<dbReference type="InterPro" id="IPR011761">
    <property type="entry name" value="ATP-grasp"/>
</dbReference>
<dbReference type="InterPro" id="IPR013650">
    <property type="entry name" value="ATP-grasp_succ-CoA_synth-type"/>
</dbReference>
<dbReference type="InterPro" id="IPR013815">
    <property type="entry name" value="ATP_grasp_subdomain_1"/>
</dbReference>
<dbReference type="InterPro" id="IPR017866">
    <property type="entry name" value="Succ-CoA_synthase_bsu_CS"/>
</dbReference>
<dbReference type="InterPro" id="IPR005811">
    <property type="entry name" value="SUCC_ACL_C"/>
</dbReference>
<dbReference type="InterPro" id="IPR005809">
    <property type="entry name" value="Succ_CoA_ligase-like_bsu"/>
</dbReference>
<dbReference type="InterPro" id="IPR016102">
    <property type="entry name" value="Succinyl-CoA_synth-like"/>
</dbReference>
<dbReference type="NCBIfam" id="NF001913">
    <property type="entry name" value="PRK00696.1"/>
    <property type="match status" value="1"/>
</dbReference>
<dbReference type="NCBIfam" id="TIGR01016">
    <property type="entry name" value="sucCoAbeta"/>
    <property type="match status" value="1"/>
</dbReference>
<dbReference type="PANTHER" id="PTHR11815:SF10">
    <property type="entry name" value="SUCCINATE--COA LIGASE [GDP-FORMING] SUBUNIT BETA, MITOCHONDRIAL"/>
    <property type="match status" value="1"/>
</dbReference>
<dbReference type="PANTHER" id="PTHR11815">
    <property type="entry name" value="SUCCINYL-COA SYNTHETASE BETA CHAIN"/>
    <property type="match status" value="1"/>
</dbReference>
<dbReference type="Pfam" id="PF08442">
    <property type="entry name" value="ATP-grasp_2"/>
    <property type="match status" value="1"/>
</dbReference>
<dbReference type="Pfam" id="PF00549">
    <property type="entry name" value="Ligase_CoA"/>
    <property type="match status" value="1"/>
</dbReference>
<dbReference type="PIRSF" id="PIRSF001554">
    <property type="entry name" value="SucCS_beta"/>
    <property type="match status" value="1"/>
</dbReference>
<dbReference type="SUPFAM" id="SSF56059">
    <property type="entry name" value="Glutathione synthetase ATP-binding domain-like"/>
    <property type="match status" value="1"/>
</dbReference>
<dbReference type="SUPFAM" id="SSF52210">
    <property type="entry name" value="Succinyl-CoA synthetase domains"/>
    <property type="match status" value="1"/>
</dbReference>
<dbReference type="PROSITE" id="PS50975">
    <property type="entry name" value="ATP_GRASP"/>
    <property type="match status" value="1"/>
</dbReference>
<dbReference type="PROSITE" id="PS01217">
    <property type="entry name" value="SUCCINYL_COA_LIG_3"/>
    <property type="match status" value="1"/>
</dbReference>
<feature type="chain" id="PRO_1000082123" description="Succinate--CoA ligase [ADP-forming] subunit beta">
    <location>
        <begin position="1"/>
        <end position="397"/>
    </location>
</feature>
<feature type="domain" description="ATP-grasp" evidence="1">
    <location>
        <begin position="9"/>
        <end position="254"/>
    </location>
</feature>
<feature type="binding site" evidence="1">
    <location>
        <position position="46"/>
    </location>
    <ligand>
        <name>ATP</name>
        <dbReference type="ChEBI" id="CHEBI:30616"/>
    </ligand>
</feature>
<feature type="binding site" evidence="1">
    <location>
        <begin position="53"/>
        <end position="55"/>
    </location>
    <ligand>
        <name>ATP</name>
        <dbReference type="ChEBI" id="CHEBI:30616"/>
    </ligand>
</feature>
<feature type="binding site" evidence="1">
    <location>
        <position position="109"/>
    </location>
    <ligand>
        <name>ATP</name>
        <dbReference type="ChEBI" id="CHEBI:30616"/>
    </ligand>
</feature>
<feature type="binding site" evidence="1">
    <location>
        <position position="112"/>
    </location>
    <ligand>
        <name>ATP</name>
        <dbReference type="ChEBI" id="CHEBI:30616"/>
    </ligand>
</feature>
<feature type="binding site" evidence="1">
    <location>
        <position position="117"/>
    </location>
    <ligand>
        <name>ATP</name>
        <dbReference type="ChEBI" id="CHEBI:30616"/>
    </ligand>
</feature>
<feature type="binding site" evidence="1">
    <location>
        <position position="209"/>
    </location>
    <ligand>
        <name>Mg(2+)</name>
        <dbReference type="ChEBI" id="CHEBI:18420"/>
    </ligand>
</feature>
<feature type="binding site" evidence="1">
    <location>
        <position position="223"/>
    </location>
    <ligand>
        <name>Mg(2+)</name>
        <dbReference type="ChEBI" id="CHEBI:18420"/>
    </ligand>
</feature>
<feature type="binding site" evidence="1">
    <location>
        <position position="274"/>
    </location>
    <ligand>
        <name>substrate</name>
        <note>ligand shared with subunit alpha</note>
    </ligand>
</feature>
<feature type="binding site" evidence="1">
    <location>
        <begin position="331"/>
        <end position="333"/>
    </location>
    <ligand>
        <name>substrate</name>
        <note>ligand shared with subunit alpha</note>
    </ligand>
</feature>
<keyword id="KW-0067">ATP-binding</keyword>
<keyword id="KW-0436">Ligase</keyword>
<keyword id="KW-0460">Magnesium</keyword>
<keyword id="KW-0479">Metal-binding</keyword>
<keyword id="KW-0547">Nucleotide-binding</keyword>
<keyword id="KW-0816">Tricarboxylic acid cycle</keyword>
<name>SUCC_CHESB</name>